<sequence>MANNVTDSSFKKEVLESDLPVLVDFWAEWCGPCKMLTPIIDEISKELKGKVKVLKMNIDENPNIPSEYGIRSIPTIMLFKNGEQKDTKIGLQQKNSLLDWINKSI</sequence>
<gene>
    <name type="primary">trxA</name>
    <name type="ordered locus">RF_0002</name>
</gene>
<protein>
    <recommendedName>
        <fullName>Thioredoxin</fullName>
        <shortName>Trx</shortName>
    </recommendedName>
</protein>
<dbReference type="EMBL" id="CP000053">
    <property type="protein sequence ID" value="AAY60853.1"/>
    <property type="status" value="ALT_INIT"/>
    <property type="molecule type" value="Genomic_DNA"/>
</dbReference>
<dbReference type="SMR" id="Q4UNK3"/>
<dbReference type="STRING" id="315456.RF_0002"/>
<dbReference type="KEGG" id="rfe:RF_0002"/>
<dbReference type="eggNOG" id="COG3118">
    <property type="taxonomic scope" value="Bacteria"/>
</dbReference>
<dbReference type="HOGENOM" id="CLU_090389_10_2_5"/>
<dbReference type="OrthoDB" id="9790390at2"/>
<dbReference type="Proteomes" id="UP000008548">
    <property type="component" value="Chromosome"/>
</dbReference>
<dbReference type="GO" id="GO:0005737">
    <property type="term" value="C:cytoplasm"/>
    <property type="evidence" value="ECO:0007669"/>
    <property type="project" value="TreeGrafter"/>
</dbReference>
<dbReference type="GO" id="GO:0015035">
    <property type="term" value="F:protein-disulfide reductase activity"/>
    <property type="evidence" value="ECO:0007669"/>
    <property type="project" value="InterPro"/>
</dbReference>
<dbReference type="CDD" id="cd02947">
    <property type="entry name" value="TRX_family"/>
    <property type="match status" value="1"/>
</dbReference>
<dbReference type="FunFam" id="3.40.30.10:FF:000001">
    <property type="entry name" value="Thioredoxin"/>
    <property type="match status" value="1"/>
</dbReference>
<dbReference type="Gene3D" id="3.40.30.10">
    <property type="entry name" value="Glutaredoxin"/>
    <property type="match status" value="1"/>
</dbReference>
<dbReference type="InterPro" id="IPR005746">
    <property type="entry name" value="Thioredoxin"/>
</dbReference>
<dbReference type="InterPro" id="IPR036249">
    <property type="entry name" value="Thioredoxin-like_sf"/>
</dbReference>
<dbReference type="InterPro" id="IPR017937">
    <property type="entry name" value="Thioredoxin_CS"/>
</dbReference>
<dbReference type="InterPro" id="IPR013766">
    <property type="entry name" value="Thioredoxin_domain"/>
</dbReference>
<dbReference type="NCBIfam" id="TIGR01068">
    <property type="entry name" value="thioredoxin"/>
    <property type="match status" value="1"/>
</dbReference>
<dbReference type="PANTHER" id="PTHR45663">
    <property type="entry name" value="GEO12009P1"/>
    <property type="match status" value="1"/>
</dbReference>
<dbReference type="PANTHER" id="PTHR45663:SF11">
    <property type="entry name" value="GEO12009P1"/>
    <property type="match status" value="1"/>
</dbReference>
<dbReference type="Pfam" id="PF00085">
    <property type="entry name" value="Thioredoxin"/>
    <property type="match status" value="1"/>
</dbReference>
<dbReference type="PIRSF" id="PIRSF000077">
    <property type="entry name" value="Thioredoxin"/>
    <property type="match status" value="1"/>
</dbReference>
<dbReference type="PRINTS" id="PR00421">
    <property type="entry name" value="THIOREDOXIN"/>
</dbReference>
<dbReference type="SUPFAM" id="SSF52833">
    <property type="entry name" value="Thioredoxin-like"/>
    <property type="match status" value="1"/>
</dbReference>
<dbReference type="PROSITE" id="PS00194">
    <property type="entry name" value="THIOREDOXIN_1"/>
    <property type="match status" value="1"/>
</dbReference>
<dbReference type="PROSITE" id="PS51352">
    <property type="entry name" value="THIOREDOXIN_2"/>
    <property type="match status" value="1"/>
</dbReference>
<name>THIO_RICFE</name>
<accession>Q4UNK3</accession>
<evidence type="ECO:0000250" key="1"/>
<evidence type="ECO:0000255" key="2">
    <source>
        <dbReference type="PROSITE-ProRule" id="PRU00691"/>
    </source>
</evidence>
<evidence type="ECO:0000305" key="3"/>
<organism>
    <name type="scientific">Rickettsia felis (strain ATCC VR-1525 / URRWXCal2)</name>
    <name type="common">Rickettsia azadi</name>
    <dbReference type="NCBI Taxonomy" id="315456"/>
    <lineage>
        <taxon>Bacteria</taxon>
        <taxon>Pseudomonadati</taxon>
        <taxon>Pseudomonadota</taxon>
        <taxon>Alphaproteobacteria</taxon>
        <taxon>Rickettsiales</taxon>
        <taxon>Rickettsiaceae</taxon>
        <taxon>Rickettsieae</taxon>
        <taxon>Rickettsia</taxon>
        <taxon>spotted fever group</taxon>
    </lineage>
</organism>
<reference key="1">
    <citation type="journal article" date="2005" name="PLoS Biol.">
        <title>The genome sequence of Rickettsia felis identifies the first putative conjugative plasmid in an obligate intracellular parasite.</title>
        <authorList>
            <person name="Ogata H."/>
            <person name="Renesto P."/>
            <person name="Audic S."/>
            <person name="Robert C."/>
            <person name="Blanc G."/>
            <person name="Fournier P.-E."/>
            <person name="Parinello H."/>
            <person name="Claverie J.-M."/>
            <person name="Raoult D."/>
        </authorList>
    </citation>
    <scope>NUCLEOTIDE SEQUENCE [LARGE SCALE GENOMIC DNA]</scope>
    <source>
        <strain>ATCC VR-1525 / URRWXCal2</strain>
    </source>
</reference>
<proteinExistence type="inferred from homology"/>
<feature type="chain" id="PRO_0000272627" description="Thioredoxin">
    <location>
        <begin position="1"/>
        <end position="105"/>
    </location>
</feature>
<feature type="domain" description="Thioredoxin" evidence="2">
    <location>
        <begin position="1"/>
        <end position="105"/>
    </location>
</feature>
<feature type="disulfide bond" description="Redox-active" evidence="2">
    <location>
        <begin position="30"/>
        <end position="33"/>
    </location>
</feature>
<comment type="function">
    <text evidence="1">Component of the thioredoxin-thioredoxin reductase system. Participates in various redox reactions through the reversible oxidation of its active center dithiol to a disulfide and catalyzes dithiol-disulfide exchange reactions (By similarity).</text>
</comment>
<comment type="similarity">
    <text evidence="3">Belongs to the thioredoxin family.</text>
</comment>
<comment type="sequence caution" evidence="3">
    <conflict type="erroneous initiation">
        <sequence resource="EMBL-CDS" id="AAY60853"/>
    </conflict>
</comment>
<keyword id="KW-1015">Disulfide bond</keyword>
<keyword id="KW-0249">Electron transport</keyword>
<keyword id="KW-0676">Redox-active center</keyword>
<keyword id="KW-0813">Transport</keyword>